<comment type="function">
    <text evidence="1">Functions in the biosynthesis of branched-chain amino acids. Catalyzes the dehydration of (2R,3R)-2,3-dihydroxy-3-methylpentanoate (2,3-dihydroxy-3-methylvalerate) into 2-oxo-3-methylpentanoate (2-oxo-3-methylvalerate) and of (2R)-2,3-dihydroxy-3-methylbutanoate (2,3-dihydroxyisovalerate) into 2-oxo-3-methylbutanoate (2-oxoisovalerate), the penultimate precursor to L-isoleucine and L-valine, respectively.</text>
</comment>
<comment type="catalytic activity">
    <reaction evidence="1">
        <text>(2R)-2,3-dihydroxy-3-methylbutanoate = 3-methyl-2-oxobutanoate + H2O</text>
        <dbReference type="Rhea" id="RHEA:24809"/>
        <dbReference type="ChEBI" id="CHEBI:11851"/>
        <dbReference type="ChEBI" id="CHEBI:15377"/>
        <dbReference type="ChEBI" id="CHEBI:49072"/>
        <dbReference type="EC" id="4.2.1.9"/>
    </reaction>
    <physiologicalReaction direction="left-to-right" evidence="1">
        <dbReference type="Rhea" id="RHEA:24810"/>
    </physiologicalReaction>
</comment>
<comment type="catalytic activity">
    <reaction evidence="1">
        <text>(2R,3R)-2,3-dihydroxy-3-methylpentanoate = (S)-3-methyl-2-oxopentanoate + H2O</text>
        <dbReference type="Rhea" id="RHEA:27694"/>
        <dbReference type="ChEBI" id="CHEBI:15377"/>
        <dbReference type="ChEBI" id="CHEBI:35146"/>
        <dbReference type="ChEBI" id="CHEBI:49258"/>
        <dbReference type="EC" id="4.2.1.9"/>
    </reaction>
    <physiologicalReaction direction="left-to-right" evidence="1">
        <dbReference type="Rhea" id="RHEA:27695"/>
    </physiologicalReaction>
</comment>
<comment type="cofactor">
    <cofactor evidence="1">
        <name>[2Fe-2S] cluster</name>
        <dbReference type="ChEBI" id="CHEBI:190135"/>
    </cofactor>
    <text evidence="1">Binds 1 [2Fe-2S] cluster per subunit. This cluster acts as a Lewis acid cofactor.</text>
</comment>
<comment type="cofactor">
    <cofactor evidence="1">
        <name>Mg(2+)</name>
        <dbReference type="ChEBI" id="CHEBI:18420"/>
    </cofactor>
</comment>
<comment type="pathway">
    <text evidence="1">Amino-acid biosynthesis; L-isoleucine biosynthesis; L-isoleucine from 2-oxobutanoate: step 3/4.</text>
</comment>
<comment type="pathway">
    <text evidence="1">Amino-acid biosynthesis; L-valine biosynthesis; L-valine from pyruvate: step 3/4.</text>
</comment>
<comment type="subunit">
    <text evidence="1">Homodimer.</text>
</comment>
<comment type="similarity">
    <text evidence="1">Belongs to the IlvD/Edd family.</text>
</comment>
<name>ILVD_BRUC2</name>
<feature type="chain" id="PRO_1000073967" description="Dihydroxy-acid dehydratase">
    <location>
        <begin position="1"/>
        <end position="611"/>
    </location>
</feature>
<feature type="active site" description="Proton acceptor" evidence="1">
    <location>
        <position position="517"/>
    </location>
</feature>
<feature type="binding site" evidence="1">
    <location>
        <position position="81"/>
    </location>
    <ligand>
        <name>Mg(2+)</name>
        <dbReference type="ChEBI" id="CHEBI:18420"/>
    </ligand>
</feature>
<feature type="binding site" evidence="1">
    <location>
        <position position="122"/>
    </location>
    <ligand>
        <name>[2Fe-2S] cluster</name>
        <dbReference type="ChEBI" id="CHEBI:190135"/>
    </ligand>
</feature>
<feature type="binding site" evidence="1">
    <location>
        <position position="123"/>
    </location>
    <ligand>
        <name>Mg(2+)</name>
        <dbReference type="ChEBI" id="CHEBI:18420"/>
    </ligand>
</feature>
<feature type="binding site" description="via carbamate group" evidence="1">
    <location>
        <position position="124"/>
    </location>
    <ligand>
        <name>Mg(2+)</name>
        <dbReference type="ChEBI" id="CHEBI:18420"/>
    </ligand>
</feature>
<feature type="binding site" evidence="1">
    <location>
        <position position="195"/>
    </location>
    <ligand>
        <name>[2Fe-2S] cluster</name>
        <dbReference type="ChEBI" id="CHEBI:190135"/>
    </ligand>
</feature>
<feature type="binding site" evidence="1">
    <location>
        <position position="491"/>
    </location>
    <ligand>
        <name>Mg(2+)</name>
        <dbReference type="ChEBI" id="CHEBI:18420"/>
    </ligand>
</feature>
<feature type="modified residue" description="N6-carboxylysine" evidence="1">
    <location>
        <position position="124"/>
    </location>
</feature>
<gene>
    <name evidence="1" type="primary">ilvD</name>
    <name type="ordered locus">BCAN_A0102</name>
</gene>
<keyword id="KW-0001">2Fe-2S</keyword>
<keyword id="KW-0028">Amino-acid biosynthesis</keyword>
<keyword id="KW-0100">Branched-chain amino acid biosynthesis</keyword>
<keyword id="KW-0408">Iron</keyword>
<keyword id="KW-0411">Iron-sulfur</keyword>
<keyword id="KW-0456">Lyase</keyword>
<keyword id="KW-0460">Magnesium</keyword>
<keyword id="KW-0479">Metal-binding</keyword>
<keyword id="KW-1185">Reference proteome</keyword>
<dbReference type="EC" id="4.2.1.9" evidence="1"/>
<dbReference type="EMBL" id="CP000872">
    <property type="protein sequence ID" value="ABX61203.1"/>
    <property type="molecule type" value="Genomic_DNA"/>
</dbReference>
<dbReference type="RefSeq" id="WP_004691283.1">
    <property type="nucleotide sequence ID" value="NC_010103.1"/>
</dbReference>
<dbReference type="SMR" id="A9M6V2"/>
<dbReference type="GeneID" id="55589896"/>
<dbReference type="KEGG" id="bcs:BCAN_A0102"/>
<dbReference type="HOGENOM" id="CLU_014271_4_2_5"/>
<dbReference type="UniPathway" id="UPA00047">
    <property type="reaction ID" value="UER00057"/>
</dbReference>
<dbReference type="UniPathway" id="UPA00049">
    <property type="reaction ID" value="UER00061"/>
</dbReference>
<dbReference type="PRO" id="PR:A9M6V2"/>
<dbReference type="Proteomes" id="UP000001385">
    <property type="component" value="Chromosome I"/>
</dbReference>
<dbReference type="GO" id="GO:0005829">
    <property type="term" value="C:cytosol"/>
    <property type="evidence" value="ECO:0007669"/>
    <property type="project" value="TreeGrafter"/>
</dbReference>
<dbReference type="GO" id="GO:0051537">
    <property type="term" value="F:2 iron, 2 sulfur cluster binding"/>
    <property type="evidence" value="ECO:0007669"/>
    <property type="project" value="UniProtKB-UniRule"/>
</dbReference>
<dbReference type="GO" id="GO:0004160">
    <property type="term" value="F:dihydroxy-acid dehydratase activity"/>
    <property type="evidence" value="ECO:0007669"/>
    <property type="project" value="UniProtKB-UniRule"/>
</dbReference>
<dbReference type="GO" id="GO:0000287">
    <property type="term" value="F:magnesium ion binding"/>
    <property type="evidence" value="ECO:0007669"/>
    <property type="project" value="UniProtKB-UniRule"/>
</dbReference>
<dbReference type="GO" id="GO:0009097">
    <property type="term" value="P:isoleucine biosynthetic process"/>
    <property type="evidence" value="ECO:0007669"/>
    <property type="project" value="UniProtKB-UniRule"/>
</dbReference>
<dbReference type="GO" id="GO:0009099">
    <property type="term" value="P:L-valine biosynthetic process"/>
    <property type="evidence" value="ECO:0007669"/>
    <property type="project" value="UniProtKB-UniRule"/>
</dbReference>
<dbReference type="FunFam" id="3.50.30.80:FF:000001">
    <property type="entry name" value="Dihydroxy-acid dehydratase"/>
    <property type="match status" value="1"/>
</dbReference>
<dbReference type="Gene3D" id="3.50.30.80">
    <property type="entry name" value="IlvD/EDD C-terminal domain-like"/>
    <property type="match status" value="1"/>
</dbReference>
<dbReference type="HAMAP" id="MF_00012">
    <property type="entry name" value="IlvD"/>
    <property type="match status" value="1"/>
</dbReference>
<dbReference type="InterPro" id="IPR042096">
    <property type="entry name" value="Dihydro-acid_dehy_C"/>
</dbReference>
<dbReference type="InterPro" id="IPR004404">
    <property type="entry name" value="DihydroxyA_deHydtase"/>
</dbReference>
<dbReference type="InterPro" id="IPR020558">
    <property type="entry name" value="DiOHA_6PGluconate_deHydtase_CS"/>
</dbReference>
<dbReference type="InterPro" id="IPR056740">
    <property type="entry name" value="ILV_EDD_C"/>
</dbReference>
<dbReference type="InterPro" id="IPR000581">
    <property type="entry name" value="ILV_EDD_N"/>
</dbReference>
<dbReference type="InterPro" id="IPR037237">
    <property type="entry name" value="IlvD/EDD_N"/>
</dbReference>
<dbReference type="NCBIfam" id="TIGR00110">
    <property type="entry name" value="ilvD"/>
    <property type="match status" value="1"/>
</dbReference>
<dbReference type="NCBIfam" id="NF009103">
    <property type="entry name" value="PRK12448.1"/>
    <property type="match status" value="1"/>
</dbReference>
<dbReference type="PANTHER" id="PTHR43661">
    <property type="entry name" value="D-XYLONATE DEHYDRATASE"/>
    <property type="match status" value="1"/>
</dbReference>
<dbReference type="PANTHER" id="PTHR43661:SF3">
    <property type="entry name" value="D-XYLONATE DEHYDRATASE YAGF-RELATED"/>
    <property type="match status" value="1"/>
</dbReference>
<dbReference type="Pfam" id="PF24877">
    <property type="entry name" value="ILV_EDD_C"/>
    <property type="match status" value="1"/>
</dbReference>
<dbReference type="Pfam" id="PF00920">
    <property type="entry name" value="ILVD_EDD_N"/>
    <property type="match status" value="1"/>
</dbReference>
<dbReference type="SUPFAM" id="SSF143975">
    <property type="entry name" value="IlvD/EDD N-terminal domain-like"/>
    <property type="match status" value="1"/>
</dbReference>
<dbReference type="SUPFAM" id="SSF52016">
    <property type="entry name" value="LeuD/IlvD-like"/>
    <property type="match status" value="1"/>
</dbReference>
<dbReference type="PROSITE" id="PS00886">
    <property type="entry name" value="ILVD_EDD_1"/>
    <property type="match status" value="1"/>
</dbReference>
<dbReference type="PROSITE" id="PS00887">
    <property type="entry name" value="ILVD_EDD_2"/>
    <property type="match status" value="1"/>
</dbReference>
<reference key="1">
    <citation type="submission" date="2007-10" db="EMBL/GenBank/DDBJ databases">
        <title>Brucella canis ATCC 23365 whole genome shotgun sequencing project.</title>
        <authorList>
            <person name="Setubal J.C."/>
            <person name="Bowns C."/>
            <person name="Boyle S."/>
            <person name="Crasta O.R."/>
            <person name="Czar M.J."/>
            <person name="Dharmanolla C."/>
            <person name="Gillespie J.J."/>
            <person name="Kenyon R.W."/>
            <person name="Lu J."/>
            <person name="Mane S."/>
            <person name="Mohapatra S."/>
            <person name="Nagrani S."/>
            <person name="Purkayastha A."/>
            <person name="Rajasimha H.K."/>
            <person name="Shallom J.M."/>
            <person name="Shallom S."/>
            <person name="Shukla M."/>
            <person name="Snyder E.E."/>
            <person name="Sobral B.W."/>
            <person name="Wattam A.R."/>
            <person name="Will R."/>
            <person name="Williams K."/>
            <person name="Yoo H."/>
            <person name="Bruce D."/>
            <person name="Detter C."/>
            <person name="Munk C."/>
            <person name="Brettin T.S."/>
        </authorList>
    </citation>
    <scope>NUCLEOTIDE SEQUENCE [LARGE SCALE GENOMIC DNA]</scope>
    <source>
        <strain>ATCC 23365 / NCTC 10854 / RM-666</strain>
    </source>
</reference>
<protein>
    <recommendedName>
        <fullName evidence="1">Dihydroxy-acid dehydratase</fullName>
        <shortName evidence="1">DAD</shortName>
        <ecNumber evidence="1">4.2.1.9</ecNumber>
    </recommendedName>
</protein>
<organism>
    <name type="scientific">Brucella canis (strain ATCC 23365 / NCTC 10854 / RM-666)</name>
    <dbReference type="NCBI Taxonomy" id="483179"/>
    <lineage>
        <taxon>Bacteria</taxon>
        <taxon>Pseudomonadati</taxon>
        <taxon>Pseudomonadota</taxon>
        <taxon>Alphaproteobacteria</taxon>
        <taxon>Hyphomicrobiales</taxon>
        <taxon>Brucellaceae</taxon>
        <taxon>Brucella/Ochrobactrum group</taxon>
        <taxon>Brucella</taxon>
    </lineage>
</organism>
<accession>A9M6V2</accession>
<sequence>MPPYRSRTTTHGRNMAGARGLWRATGMKDEDFGKPIIAVVNSFTQFVPGHVHLKDLGQLVAREIESAGGVAKEFNTIAVDDGIAMGHDGMLYSLPSRELIADSVEYMVNAHCADAMVCISNCDKITPGMLMAALRLNIPVVFVSGGPMEAGKVVWEDSVKKLDLVDAMVAAADDHYTDEQVKAIERSACPTCGSCSGMFTANSMNCLTEALGLSLPGNGSTLATHADRKRLFVEAGHLIVDLARRYYEQDDESVLPRSIATFSAFENAMTLDIAMGGSTNTVLHLLAAAQEAEIDFTMADIDRLSRRVPVLCKVAPAVSSVHMEDVHHAGGIMGILGQLDNAGLLTTSIPTVHSETLAKALDHWDVTRTNSEMVHKFYSAAPGGVPTQVAFSQERRFDKVDTDREKGVIRSKEHAFSQDGGLAVLYGNLAEDGCIVKTAGVDDSILKFSGPARIFESQDSAVLGILNGKIKPGDIVLIRYEGPRGGPGMQEMLYPTSYLKSKGFGKACALITDGRFSGGSSGLSIGHVSPEAAEGGTIGLVREGDIIDIDIPNRKIHLAVDDATLAERRAEQDAAGWKPAEERKRKISTALKAYAAMATSAARGAVRKLPD</sequence>
<evidence type="ECO:0000255" key="1">
    <source>
        <dbReference type="HAMAP-Rule" id="MF_00012"/>
    </source>
</evidence>
<proteinExistence type="inferred from homology"/>